<reference key="1">
    <citation type="journal article" date="2007" name="Proc. Natl. Acad. Sci. U.S.A.">
        <title>The genome of Syntrophus aciditrophicus: life at the thermodynamic limit of microbial growth.</title>
        <authorList>
            <person name="McInerney M.J."/>
            <person name="Rohlin L."/>
            <person name="Mouttaki H."/>
            <person name="Kim U."/>
            <person name="Krupp R.S."/>
            <person name="Rios-Hernandez L."/>
            <person name="Sieber J."/>
            <person name="Struchtemeyer C.G."/>
            <person name="Bhattacharyya A."/>
            <person name="Campbell J.W."/>
            <person name="Gunsalus R.P."/>
        </authorList>
    </citation>
    <scope>NUCLEOTIDE SEQUENCE [LARGE SCALE GENOMIC DNA]</scope>
    <source>
        <strain>SB</strain>
    </source>
</reference>
<organism>
    <name type="scientific">Syntrophus aciditrophicus (strain SB)</name>
    <dbReference type="NCBI Taxonomy" id="56780"/>
    <lineage>
        <taxon>Bacteria</taxon>
        <taxon>Pseudomonadati</taxon>
        <taxon>Thermodesulfobacteriota</taxon>
        <taxon>Syntrophia</taxon>
        <taxon>Syntrophales</taxon>
        <taxon>Syntrophaceae</taxon>
        <taxon>Syntrophus</taxon>
    </lineage>
</organism>
<protein>
    <recommendedName>
        <fullName evidence="1">Large ribosomal subunit protein uL4</fullName>
    </recommendedName>
    <alternativeName>
        <fullName evidence="3">50S ribosomal protein L4</fullName>
    </alternativeName>
</protein>
<feature type="chain" id="PRO_0000242453" description="Large ribosomal subunit protein uL4">
    <location>
        <begin position="1"/>
        <end position="217"/>
    </location>
</feature>
<feature type="region of interest" description="Disordered" evidence="2">
    <location>
        <begin position="58"/>
        <end position="90"/>
    </location>
</feature>
<dbReference type="EMBL" id="CP000252">
    <property type="protein sequence ID" value="ABC76181.1"/>
    <property type="molecule type" value="Genomic_DNA"/>
</dbReference>
<dbReference type="SMR" id="Q2LQA0"/>
<dbReference type="FunCoup" id="Q2LQA0">
    <property type="interactions" value="615"/>
</dbReference>
<dbReference type="STRING" id="56780.SYN_00986"/>
<dbReference type="KEGG" id="sat:SYN_00986"/>
<dbReference type="eggNOG" id="COG0088">
    <property type="taxonomic scope" value="Bacteria"/>
</dbReference>
<dbReference type="HOGENOM" id="CLU_041575_5_2_7"/>
<dbReference type="InParanoid" id="Q2LQA0"/>
<dbReference type="Proteomes" id="UP000001933">
    <property type="component" value="Chromosome"/>
</dbReference>
<dbReference type="GO" id="GO:1990904">
    <property type="term" value="C:ribonucleoprotein complex"/>
    <property type="evidence" value="ECO:0007669"/>
    <property type="project" value="UniProtKB-KW"/>
</dbReference>
<dbReference type="GO" id="GO:0005840">
    <property type="term" value="C:ribosome"/>
    <property type="evidence" value="ECO:0007669"/>
    <property type="project" value="UniProtKB-KW"/>
</dbReference>
<dbReference type="GO" id="GO:0019843">
    <property type="term" value="F:rRNA binding"/>
    <property type="evidence" value="ECO:0007669"/>
    <property type="project" value="UniProtKB-UniRule"/>
</dbReference>
<dbReference type="GO" id="GO:0003735">
    <property type="term" value="F:structural constituent of ribosome"/>
    <property type="evidence" value="ECO:0007669"/>
    <property type="project" value="InterPro"/>
</dbReference>
<dbReference type="GO" id="GO:0006412">
    <property type="term" value="P:translation"/>
    <property type="evidence" value="ECO:0007669"/>
    <property type="project" value="UniProtKB-UniRule"/>
</dbReference>
<dbReference type="Gene3D" id="3.40.1370.10">
    <property type="match status" value="1"/>
</dbReference>
<dbReference type="HAMAP" id="MF_01328_B">
    <property type="entry name" value="Ribosomal_uL4_B"/>
    <property type="match status" value="1"/>
</dbReference>
<dbReference type="InterPro" id="IPR002136">
    <property type="entry name" value="Ribosomal_uL4"/>
</dbReference>
<dbReference type="InterPro" id="IPR013005">
    <property type="entry name" value="Ribosomal_uL4-like"/>
</dbReference>
<dbReference type="InterPro" id="IPR023574">
    <property type="entry name" value="Ribosomal_uL4_dom_sf"/>
</dbReference>
<dbReference type="NCBIfam" id="TIGR03953">
    <property type="entry name" value="rplD_bact"/>
    <property type="match status" value="1"/>
</dbReference>
<dbReference type="PANTHER" id="PTHR10746">
    <property type="entry name" value="50S RIBOSOMAL PROTEIN L4"/>
    <property type="match status" value="1"/>
</dbReference>
<dbReference type="PANTHER" id="PTHR10746:SF6">
    <property type="entry name" value="LARGE RIBOSOMAL SUBUNIT PROTEIN UL4M"/>
    <property type="match status" value="1"/>
</dbReference>
<dbReference type="Pfam" id="PF00573">
    <property type="entry name" value="Ribosomal_L4"/>
    <property type="match status" value="1"/>
</dbReference>
<dbReference type="SUPFAM" id="SSF52166">
    <property type="entry name" value="Ribosomal protein L4"/>
    <property type="match status" value="1"/>
</dbReference>
<evidence type="ECO:0000255" key="1">
    <source>
        <dbReference type="HAMAP-Rule" id="MF_01328"/>
    </source>
</evidence>
<evidence type="ECO:0000256" key="2">
    <source>
        <dbReference type="SAM" id="MobiDB-lite"/>
    </source>
</evidence>
<evidence type="ECO:0000305" key="3"/>
<sequence length="217" mass="24485">MKLRYSRVNKMLVAEVFDINKNKVSEIELNDAVFGAEVNDAVIYDVVRMQMASRRFGTAATKGRSDVSGGGKKPWRQKGTGRARSGTSRSPIWRGGGIVFGPVPRDYKYNVPKKVRKNALRSVLSLKYQGQKLVVLKDFPLDEIKTKKFKEVVDRFGLKKALFVTEERNEFLEKSSRNIAGIKMVRSEGLNVYDVLNHEHLVIIEPAVKKLEGALKS</sequence>
<comment type="function">
    <text evidence="1">One of the primary rRNA binding proteins, this protein initially binds near the 5'-end of the 23S rRNA. It is important during the early stages of 50S assembly. It makes multiple contacts with different domains of the 23S rRNA in the assembled 50S subunit and ribosome.</text>
</comment>
<comment type="function">
    <text evidence="1">Forms part of the polypeptide exit tunnel.</text>
</comment>
<comment type="subunit">
    <text evidence="1">Part of the 50S ribosomal subunit.</text>
</comment>
<comment type="similarity">
    <text evidence="1">Belongs to the universal ribosomal protein uL4 family.</text>
</comment>
<accession>Q2LQA0</accession>
<keyword id="KW-1185">Reference proteome</keyword>
<keyword id="KW-0687">Ribonucleoprotein</keyword>
<keyword id="KW-0689">Ribosomal protein</keyword>
<keyword id="KW-0694">RNA-binding</keyword>
<keyword id="KW-0699">rRNA-binding</keyword>
<gene>
    <name evidence="1" type="primary">rplD</name>
    <name type="ordered locus">SYNAS_03020</name>
    <name type="ORF">SYN_00986</name>
</gene>
<name>RL4_SYNAS</name>
<proteinExistence type="inferred from homology"/>